<proteinExistence type="evidence at transcript level"/>
<gene>
    <name type="primary">B3GALT5</name>
    <name type="ordered locus">At1g22015</name>
    <name type="ORF">F2E2.6</name>
</gene>
<protein>
    <recommendedName>
        <fullName>Probable beta-1,3-galactosyltransferase 5</fullName>
        <ecNumber>2.4.1.-</ecNumber>
    </recommendedName>
</protein>
<sequence length="398" mass="45201">MKHNNKVSKRLTMTWVPLLCISCFFLGAIFTSKLRSASSDSGSQLILQHRRDQELKIVTQDYAHEKKKSQDNDVMEEVLKTHKAIESLDKSVSMLQKQLSATHSPQQIVNVSATNSSTEGNQKNKVFMVIGINTAFSSRKRRDSLRETWMPQGEKLEKLEKEKGIVVKFMIGHSSTPNSMLDKEIDSEDAQYNDFFRLDHVEGYYNLSAKTKSFFSSAVAKWDAEFYVKIDDDVHVNLGTLASTLASHRSKPRVYIGCMKSGPVLTKKTAKYREPEFWKFGEEGNKYFRHATGQIYAISKDLATYISNNQPILHKYANEDVTLGSWFIGLEVEQIDDRNFCCGTPPDCEMRAEAGEMCVATFDWKCSGVCRSVDRMWMVHVMCGEGSKAVWDANLKLS</sequence>
<organism>
    <name type="scientific">Arabidopsis thaliana</name>
    <name type="common">Mouse-ear cress</name>
    <dbReference type="NCBI Taxonomy" id="3702"/>
    <lineage>
        <taxon>Eukaryota</taxon>
        <taxon>Viridiplantae</taxon>
        <taxon>Streptophyta</taxon>
        <taxon>Embryophyta</taxon>
        <taxon>Tracheophyta</taxon>
        <taxon>Spermatophyta</taxon>
        <taxon>Magnoliopsida</taxon>
        <taxon>eudicotyledons</taxon>
        <taxon>Gunneridae</taxon>
        <taxon>Pentapetalae</taxon>
        <taxon>rosids</taxon>
        <taxon>malvids</taxon>
        <taxon>Brassicales</taxon>
        <taxon>Brassicaceae</taxon>
        <taxon>Camelineae</taxon>
        <taxon>Arabidopsis</taxon>
    </lineage>
</organism>
<evidence type="ECO:0000250" key="1"/>
<evidence type="ECO:0000255" key="2"/>
<evidence type="ECO:0000305" key="3"/>
<reference key="1">
    <citation type="journal article" date="2000" name="Nature">
        <title>Sequence and analysis of chromosome 1 of the plant Arabidopsis thaliana.</title>
        <authorList>
            <person name="Theologis A."/>
            <person name="Ecker J.R."/>
            <person name="Palm C.J."/>
            <person name="Federspiel N.A."/>
            <person name="Kaul S."/>
            <person name="White O."/>
            <person name="Alonso J."/>
            <person name="Altafi H."/>
            <person name="Araujo R."/>
            <person name="Bowman C.L."/>
            <person name="Brooks S.Y."/>
            <person name="Buehler E."/>
            <person name="Chan A."/>
            <person name="Chao Q."/>
            <person name="Chen H."/>
            <person name="Cheuk R.F."/>
            <person name="Chin C.W."/>
            <person name="Chung M.K."/>
            <person name="Conn L."/>
            <person name="Conway A.B."/>
            <person name="Conway A.R."/>
            <person name="Creasy T.H."/>
            <person name="Dewar K."/>
            <person name="Dunn P."/>
            <person name="Etgu P."/>
            <person name="Feldblyum T.V."/>
            <person name="Feng J.-D."/>
            <person name="Fong B."/>
            <person name="Fujii C.Y."/>
            <person name="Gill J.E."/>
            <person name="Goldsmith A.D."/>
            <person name="Haas B."/>
            <person name="Hansen N.F."/>
            <person name="Hughes B."/>
            <person name="Huizar L."/>
            <person name="Hunter J.L."/>
            <person name="Jenkins J."/>
            <person name="Johnson-Hopson C."/>
            <person name="Khan S."/>
            <person name="Khaykin E."/>
            <person name="Kim C.J."/>
            <person name="Koo H.L."/>
            <person name="Kremenetskaia I."/>
            <person name="Kurtz D.B."/>
            <person name="Kwan A."/>
            <person name="Lam B."/>
            <person name="Langin-Hooper S."/>
            <person name="Lee A."/>
            <person name="Lee J.M."/>
            <person name="Lenz C.A."/>
            <person name="Li J.H."/>
            <person name="Li Y.-P."/>
            <person name="Lin X."/>
            <person name="Liu S.X."/>
            <person name="Liu Z.A."/>
            <person name="Luros J.S."/>
            <person name="Maiti R."/>
            <person name="Marziali A."/>
            <person name="Militscher J."/>
            <person name="Miranda M."/>
            <person name="Nguyen M."/>
            <person name="Nierman W.C."/>
            <person name="Osborne B.I."/>
            <person name="Pai G."/>
            <person name="Peterson J."/>
            <person name="Pham P.K."/>
            <person name="Rizzo M."/>
            <person name="Rooney T."/>
            <person name="Rowley D."/>
            <person name="Sakano H."/>
            <person name="Salzberg S.L."/>
            <person name="Schwartz J.R."/>
            <person name="Shinn P."/>
            <person name="Southwick A.M."/>
            <person name="Sun H."/>
            <person name="Tallon L.J."/>
            <person name="Tambunga G."/>
            <person name="Toriumi M.J."/>
            <person name="Town C.D."/>
            <person name="Utterback T."/>
            <person name="Van Aken S."/>
            <person name="Vaysberg M."/>
            <person name="Vysotskaia V.S."/>
            <person name="Walker M."/>
            <person name="Wu D."/>
            <person name="Yu G."/>
            <person name="Fraser C.M."/>
            <person name="Venter J.C."/>
            <person name="Davis R.W."/>
        </authorList>
    </citation>
    <scope>NUCLEOTIDE SEQUENCE [LARGE SCALE GENOMIC DNA]</scope>
    <source>
        <strain>cv. Columbia</strain>
    </source>
</reference>
<reference key="2">
    <citation type="journal article" date="2017" name="Plant J.">
        <title>Araport11: a complete reannotation of the Arabidopsis thaliana reference genome.</title>
        <authorList>
            <person name="Cheng C.Y."/>
            <person name="Krishnakumar V."/>
            <person name="Chan A.P."/>
            <person name="Thibaud-Nissen F."/>
            <person name="Schobel S."/>
            <person name="Town C.D."/>
        </authorList>
    </citation>
    <scope>GENOME REANNOTATION</scope>
    <source>
        <strain>cv. Columbia</strain>
    </source>
</reference>
<reference key="3">
    <citation type="submission" date="2006-07" db="EMBL/GenBank/DDBJ databases">
        <title>Large-scale analysis of RIKEN Arabidopsis full-length (RAFL) cDNAs.</title>
        <authorList>
            <person name="Totoki Y."/>
            <person name="Seki M."/>
            <person name="Ishida J."/>
            <person name="Nakajima M."/>
            <person name="Enju A."/>
            <person name="Kamiya A."/>
            <person name="Narusaka M."/>
            <person name="Shin-i T."/>
            <person name="Nakagawa M."/>
            <person name="Sakamoto N."/>
            <person name="Oishi K."/>
            <person name="Kohara Y."/>
            <person name="Kobayashi M."/>
            <person name="Toyoda A."/>
            <person name="Sakaki Y."/>
            <person name="Sakurai T."/>
            <person name="Iida K."/>
            <person name="Akiyama K."/>
            <person name="Satou M."/>
            <person name="Toyoda T."/>
            <person name="Konagaya A."/>
            <person name="Carninci P."/>
            <person name="Kawai J."/>
            <person name="Hayashizaki Y."/>
            <person name="Shinozaki K."/>
        </authorList>
    </citation>
    <scope>NUCLEOTIDE SEQUENCE [LARGE SCALE MRNA]</scope>
    <source>
        <strain>cv. Columbia</strain>
    </source>
</reference>
<reference key="4">
    <citation type="journal article" date="2008" name="Plant Mol. Biol.">
        <title>Identification of a novel group of putative Arabidopsis thaliana beta-(1,3)-galactosyltransferases.</title>
        <authorList>
            <person name="Qu Y."/>
            <person name="Egelund J."/>
            <person name="Gilson P.R."/>
            <person name="Houghton F."/>
            <person name="Gleeson P.A."/>
            <person name="Schultz C.J."/>
            <person name="Bacic A."/>
        </authorList>
    </citation>
    <scope>GENE FAMILY</scope>
    <scope>NOMENCLATURE</scope>
</reference>
<comment type="function">
    <text evidence="1">Beta-1,3-galactosyltransferase that transfers galactose from UDP-galactose to substrates with a terminal glycosyl residue.</text>
</comment>
<comment type="cofactor">
    <cofactor evidence="1">
        <name>Mn(2+)</name>
        <dbReference type="ChEBI" id="CHEBI:29035"/>
    </cofactor>
</comment>
<comment type="pathway">
    <text>Protein modification; protein glycosylation.</text>
</comment>
<comment type="subcellular location">
    <subcellularLocation>
        <location evidence="3">Golgi apparatus membrane</location>
        <topology evidence="3">Single-pass type II membrane protein</topology>
    </subcellularLocation>
</comment>
<comment type="similarity">
    <text evidence="3">Belongs to the glycosyltransferase 31 family.</text>
</comment>
<feature type="chain" id="PRO_0000359415" description="Probable beta-1,3-galactosyltransferase 5">
    <location>
        <begin position="1"/>
        <end position="398"/>
    </location>
</feature>
<feature type="transmembrane region" description="Helical; Signal-anchor for type II membrane protein" evidence="2">
    <location>
        <begin position="11"/>
        <end position="31"/>
    </location>
</feature>
<feature type="glycosylation site" description="N-linked (GlcNAc...) asparagine" evidence="2">
    <location>
        <position position="110"/>
    </location>
</feature>
<feature type="glycosylation site" description="N-linked (GlcNAc...) asparagine" evidence="2">
    <location>
        <position position="115"/>
    </location>
</feature>
<feature type="glycosylation site" description="N-linked (GlcNAc...) asparagine" evidence="2">
    <location>
        <position position="206"/>
    </location>
</feature>
<keyword id="KW-0325">Glycoprotein</keyword>
<keyword id="KW-0328">Glycosyltransferase</keyword>
<keyword id="KW-0333">Golgi apparatus</keyword>
<keyword id="KW-0464">Manganese</keyword>
<keyword id="KW-0472">Membrane</keyword>
<keyword id="KW-1185">Reference proteome</keyword>
<keyword id="KW-0735">Signal-anchor</keyword>
<keyword id="KW-0808">Transferase</keyword>
<keyword id="KW-0812">Transmembrane</keyword>
<keyword id="KW-1133">Transmembrane helix</keyword>
<name>B3GT5_ARATH</name>
<accession>Q9LM60</accession>
<dbReference type="EC" id="2.4.1.-"/>
<dbReference type="EMBL" id="AC069252">
    <property type="protein sequence ID" value="AAF86563.1"/>
    <property type="molecule type" value="Genomic_DNA"/>
</dbReference>
<dbReference type="EMBL" id="CP002684">
    <property type="protein sequence ID" value="AEE30185.1"/>
    <property type="molecule type" value="Genomic_DNA"/>
</dbReference>
<dbReference type="EMBL" id="AK226416">
    <property type="protein sequence ID" value="BAE98561.1"/>
    <property type="molecule type" value="mRNA"/>
</dbReference>
<dbReference type="PIR" id="B86353">
    <property type="entry name" value="B86353"/>
</dbReference>
<dbReference type="SMR" id="Q9LM60"/>
<dbReference type="FunCoup" id="Q9LM60">
    <property type="interactions" value="1536"/>
</dbReference>
<dbReference type="STRING" id="3702.Q9LM60"/>
<dbReference type="CAZy" id="GT31">
    <property type="family name" value="Glycosyltransferase Family 31"/>
</dbReference>
<dbReference type="GlyCosmos" id="Q9LM60">
    <property type="glycosylation" value="3 sites, No reported glycans"/>
</dbReference>
<dbReference type="GlyGen" id="Q9LM60">
    <property type="glycosylation" value="3 sites"/>
</dbReference>
<dbReference type="PaxDb" id="3702-AT1G22015.1"/>
<dbReference type="ProteomicsDB" id="240958"/>
<dbReference type="EnsemblPlants" id="AT1G22015.1">
    <property type="protein sequence ID" value="AT1G22015.1"/>
    <property type="gene ID" value="AT1G22015"/>
</dbReference>
<dbReference type="Gramene" id="AT1G22015.1">
    <property type="protein sequence ID" value="AT1G22015.1"/>
    <property type="gene ID" value="AT1G22015"/>
</dbReference>
<dbReference type="KEGG" id="ath:AT1G22015"/>
<dbReference type="Araport" id="AT1G22015"/>
<dbReference type="TAIR" id="AT1G22015">
    <property type="gene designation" value="DD46"/>
</dbReference>
<dbReference type="eggNOG" id="KOG2288">
    <property type="taxonomic scope" value="Eukaryota"/>
</dbReference>
<dbReference type="HOGENOM" id="CLU_040730_3_0_1"/>
<dbReference type="InParanoid" id="Q9LM60"/>
<dbReference type="OMA" id="DRMWMVH"/>
<dbReference type="OrthoDB" id="1158011at2759"/>
<dbReference type="PhylomeDB" id="Q9LM60"/>
<dbReference type="UniPathway" id="UPA00378"/>
<dbReference type="PRO" id="PR:Q9LM60"/>
<dbReference type="Proteomes" id="UP000006548">
    <property type="component" value="Chromosome 1"/>
</dbReference>
<dbReference type="ExpressionAtlas" id="Q9LM60">
    <property type="expression patterns" value="baseline and differential"/>
</dbReference>
<dbReference type="GO" id="GO:0000139">
    <property type="term" value="C:Golgi membrane"/>
    <property type="evidence" value="ECO:0007669"/>
    <property type="project" value="UniProtKB-SubCell"/>
</dbReference>
<dbReference type="GO" id="GO:0008378">
    <property type="term" value="F:galactosyltransferase activity"/>
    <property type="evidence" value="ECO:0000314"/>
    <property type="project" value="TAIR"/>
</dbReference>
<dbReference type="GO" id="GO:0006486">
    <property type="term" value="P:protein glycosylation"/>
    <property type="evidence" value="ECO:0007669"/>
    <property type="project" value="UniProtKB-UniPathway"/>
</dbReference>
<dbReference type="FunFam" id="3.90.550.50:FF:000002">
    <property type="entry name" value="Hexosyltransferase"/>
    <property type="match status" value="1"/>
</dbReference>
<dbReference type="Gene3D" id="3.90.550.50">
    <property type="match status" value="1"/>
</dbReference>
<dbReference type="InterPro" id="IPR025298">
    <property type="entry name" value="DUF4094"/>
</dbReference>
<dbReference type="InterPro" id="IPR002659">
    <property type="entry name" value="Glyco_trans_31"/>
</dbReference>
<dbReference type="PANTHER" id="PTHR11214:SF242">
    <property type="entry name" value="BETA-1,3-GALACTOSYLTRANSFERASE 5-RELATED"/>
    <property type="match status" value="1"/>
</dbReference>
<dbReference type="PANTHER" id="PTHR11214">
    <property type="entry name" value="BETA-1,3-N-ACETYLGLUCOSAMINYLTRANSFERASE"/>
    <property type="match status" value="1"/>
</dbReference>
<dbReference type="Pfam" id="PF13334">
    <property type="entry name" value="DUF4094"/>
    <property type="match status" value="1"/>
</dbReference>
<dbReference type="Pfam" id="PF01762">
    <property type="entry name" value="Galactosyl_T"/>
    <property type="match status" value="1"/>
</dbReference>